<protein>
    <recommendedName>
        <fullName>Acetylglutamate kinase</fullName>
        <ecNumber>2.7.2.8</ecNumber>
    </recommendedName>
    <alternativeName>
        <fullName>N-acetyl-L-glutamate 5-phosphotransferase</fullName>
    </alternativeName>
    <alternativeName>
        <fullName>NAG kinase</fullName>
        <shortName>NAGK</shortName>
    </alternativeName>
</protein>
<feature type="chain" id="PRO_0000112687" description="Acetylglutamate kinase">
    <location>
        <begin position="1"/>
        <end position="421"/>
    </location>
</feature>
<feature type="domain" description="N-acetyltransferase" evidence="2">
    <location>
        <begin position="274"/>
        <end position="420"/>
    </location>
</feature>
<feature type="region of interest" description="Acetylglutamate kinase">
    <location>
        <begin position="1"/>
        <end position="252"/>
    </location>
</feature>
<feature type="binding site" evidence="1">
    <location>
        <begin position="59"/>
        <end position="60"/>
    </location>
    <ligand>
        <name>substrate</name>
    </ligand>
</feature>
<feature type="binding site" evidence="1">
    <location>
        <position position="81"/>
    </location>
    <ligand>
        <name>substrate</name>
    </ligand>
</feature>
<feature type="binding site" evidence="1">
    <location>
        <position position="170"/>
    </location>
    <ligand>
        <name>substrate</name>
    </ligand>
</feature>
<feature type="site" description="Transition state stabilizer" evidence="1">
    <location>
        <position position="26"/>
    </location>
</feature>
<feature type="site" description="Transition state stabilizer" evidence="1">
    <location>
        <position position="231"/>
    </location>
</feature>
<dbReference type="EC" id="2.7.2.8"/>
<dbReference type="EMBL" id="AE003849">
    <property type="protein sequence ID" value="AAF83811.1"/>
    <property type="status" value="ALT_INIT"/>
    <property type="molecule type" value="Genomic_DNA"/>
</dbReference>
<dbReference type="PIR" id="H82734">
    <property type="entry name" value="H82734"/>
</dbReference>
<dbReference type="RefSeq" id="WP_010893520.1">
    <property type="nucleotide sequence ID" value="NC_002488.3"/>
</dbReference>
<dbReference type="SMR" id="Q9PEM7"/>
<dbReference type="STRING" id="160492.XF_1001"/>
<dbReference type="KEGG" id="xfa:XF_1001"/>
<dbReference type="PATRIC" id="fig|160492.11.peg.1071"/>
<dbReference type="eggNOG" id="COG0548">
    <property type="taxonomic scope" value="Bacteria"/>
</dbReference>
<dbReference type="HOGENOM" id="CLU_006384_4_1_6"/>
<dbReference type="UniPathway" id="UPA00068">
    <property type="reaction ID" value="UER00107"/>
</dbReference>
<dbReference type="Proteomes" id="UP000000812">
    <property type="component" value="Chromosome"/>
</dbReference>
<dbReference type="GO" id="GO:0005737">
    <property type="term" value="C:cytoplasm"/>
    <property type="evidence" value="ECO:0007669"/>
    <property type="project" value="UniProtKB-SubCell"/>
</dbReference>
<dbReference type="GO" id="GO:0003991">
    <property type="term" value="F:acetylglutamate kinase activity"/>
    <property type="evidence" value="ECO:0007669"/>
    <property type="project" value="UniProtKB-EC"/>
</dbReference>
<dbReference type="GO" id="GO:0005524">
    <property type="term" value="F:ATP binding"/>
    <property type="evidence" value="ECO:0007669"/>
    <property type="project" value="UniProtKB-KW"/>
</dbReference>
<dbReference type="GO" id="GO:0004042">
    <property type="term" value="F:L-glutamate N-acetyltransferase activity"/>
    <property type="evidence" value="ECO:0007669"/>
    <property type="project" value="TreeGrafter"/>
</dbReference>
<dbReference type="GO" id="GO:0006526">
    <property type="term" value="P:L-arginine biosynthetic process"/>
    <property type="evidence" value="ECO:0007669"/>
    <property type="project" value="UniProtKB-UniPathway"/>
</dbReference>
<dbReference type="CDD" id="cd04252">
    <property type="entry name" value="AAK_NAGK-fArgBP"/>
    <property type="match status" value="1"/>
</dbReference>
<dbReference type="CDD" id="cd04265">
    <property type="entry name" value="DUF619-NAGS-U"/>
    <property type="match status" value="1"/>
</dbReference>
<dbReference type="FunFam" id="3.40.1160.10:FF:000046">
    <property type="entry name" value="N-acetylglutamate kinase / N-acetylglutamate synthase"/>
    <property type="match status" value="1"/>
</dbReference>
<dbReference type="Gene3D" id="3.40.630.30">
    <property type="match status" value="1"/>
</dbReference>
<dbReference type="Gene3D" id="3.40.1160.10">
    <property type="entry name" value="Acetylglutamate kinase-like"/>
    <property type="match status" value="1"/>
</dbReference>
<dbReference type="InterPro" id="IPR036393">
    <property type="entry name" value="AceGlu_kinase-like_sf"/>
</dbReference>
<dbReference type="InterPro" id="IPR004662">
    <property type="entry name" value="AcgluKinase_fam"/>
</dbReference>
<dbReference type="InterPro" id="IPR016181">
    <property type="entry name" value="Acyl_CoA_acyltransferase"/>
</dbReference>
<dbReference type="InterPro" id="IPR011242">
    <property type="entry name" value="ArgB_GNAT"/>
</dbReference>
<dbReference type="InterPro" id="IPR001048">
    <property type="entry name" value="Asp/Glu/Uridylate_kinase"/>
</dbReference>
<dbReference type="InterPro" id="IPR000182">
    <property type="entry name" value="GNAT_dom"/>
</dbReference>
<dbReference type="InterPro" id="IPR041734">
    <property type="entry name" value="NAGK-fArgBP"/>
</dbReference>
<dbReference type="InterPro" id="IPR006855">
    <property type="entry name" value="Vertebrate-like_GNAT_dom"/>
</dbReference>
<dbReference type="NCBIfam" id="TIGR00761">
    <property type="entry name" value="argB"/>
    <property type="match status" value="1"/>
</dbReference>
<dbReference type="NCBIfam" id="NF003386">
    <property type="entry name" value="PRK04531.1-1"/>
    <property type="match status" value="1"/>
</dbReference>
<dbReference type="NCBIfam" id="NF003387">
    <property type="entry name" value="PRK04531.1-2"/>
    <property type="match status" value="1"/>
</dbReference>
<dbReference type="PANTHER" id="PTHR23342">
    <property type="entry name" value="N-ACETYLGLUTAMATE SYNTHASE"/>
    <property type="match status" value="1"/>
</dbReference>
<dbReference type="PANTHER" id="PTHR23342:SF0">
    <property type="entry name" value="N-ACETYLGLUTAMATE SYNTHASE, MITOCHONDRIAL"/>
    <property type="match status" value="1"/>
</dbReference>
<dbReference type="Pfam" id="PF00696">
    <property type="entry name" value="AA_kinase"/>
    <property type="match status" value="1"/>
</dbReference>
<dbReference type="Pfam" id="PF04768">
    <property type="entry name" value="NAT"/>
    <property type="match status" value="1"/>
</dbReference>
<dbReference type="PIRSF" id="PIRSF036441">
    <property type="entry name" value="NAGK_DUF619"/>
    <property type="match status" value="1"/>
</dbReference>
<dbReference type="SUPFAM" id="SSF55729">
    <property type="entry name" value="Acyl-CoA N-acyltransferases (Nat)"/>
    <property type="match status" value="1"/>
</dbReference>
<dbReference type="SUPFAM" id="SSF53633">
    <property type="entry name" value="Carbamate kinase-like"/>
    <property type="match status" value="1"/>
</dbReference>
<dbReference type="PROSITE" id="PS51731">
    <property type="entry name" value="GNAT_NAGS"/>
    <property type="match status" value="1"/>
</dbReference>
<keyword id="KW-0028">Amino-acid biosynthesis</keyword>
<keyword id="KW-0055">Arginine biosynthesis</keyword>
<keyword id="KW-0067">ATP-binding</keyword>
<keyword id="KW-0963">Cytoplasm</keyword>
<keyword id="KW-0418">Kinase</keyword>
<keyword id="KW-0547">Nucleotide-binding</keyword>
<keyword id="KW-0808">Transferase</keyword>
<sequence>MASTKEISQYLKRFSQLDAKRFAVVKVGGAVLRDDVDALTSSLSFLQEVGLTPIVLHGAGPQLDEELTAAGIQKKTVNGFRVTLPETMAIVRKVFHTSNLQLIEALQRNGARATSITGGVFEAHYLDQETYGLVGEISAVNLAPIEASLRAASIPVIASLGETPSGQILNINADVAANELVHVLQPYKIIFLTGTGGLLDADGKIINSINLSTEYEQLIQQPWVYGGMKLKIEQIKHLLDRLPLESSVSITRPADLAKELFTHKGSGTLVRRGERVIRATTWKDLDLPRLQHLIQSSFRRTLIPHYFETTPLLRAYVSENYRAAVILTKLGNVPYLDKFAVLDDAQGEGLGRAVWSIMREETPQLFWRSRHNNQANAFYYAESDGYYKQDHWKIFWNGLHHFQQIQQCVAHCAQHPPTLID</sequence>
<proteinExistence type="inferred from homology"/>
<accession>Q9PEM7</accession>
<name>ARGB_XYLFA</name>
<organism>
    <name type="scientific">Xylella fastidiosa (strain 9a5c)</name>
    <dbReference type="NCBI Taxonomy" id="160492"/>
    <lineage>
        <taxon>Bacteria</taxon>
        <taxon>Pseudomonadati</taxon>
        <taxon>Pseudomonadota</taxon>
        <taxon>Gammaproteobacteria</taxon>
        <taxon>Lysobacterales</taxon>
        <taxon>Lysobacteraceae</taxon>
        <taxon>Xylella</taxon>
    </lineage>
</organism>
<evidence type="ECO:0000250" key="1"/>
<evidence type="ECO:0000255" key="2">
    <source>
        <dbReference type="PROSITE-ProRule" id="PRU00532"/>
    </source>
</evidence>
<evidence type="ECO:0000305" key="3"/>
<reference key="1">
    <citation type="journal article" date="2000" name="Nature">
        <title>The genome sequence of the plant pathogen Xylella fastidiosa.</title>
        <authorList>
            <person name="Simpson A.J.G."/>
            <person name="Reinach F.C."/>
            <person name="Arruda P."/>
            <person name="Abreu F.A."/>
            <person name="Acencio M."/>
            <person name="Alvarenga R."/>
            <person name="Alves L.M.C."/>
            <person name="Araya J.E."/>
            <person name="Baia G.S."/>
            <person name="Baptista C.S."/>
            <person name="Barros M.H."/>
            <person name="Bonaccorsi E.D."/>
            <person name="Bordin S."/>
            <person name="Bove J.M."/>
            <person name="Briones M.R.S."/>
            <person name="Bueno M.R.P."/>
            <person name="Camargo A.A."/>
            <person name="Camargo L.E.A."/>
            <person name="Carraro D.M."/>
            <person name="Carrer H."/>
            <person name="Colauto N.B."/>
            <person name="Colombo C."/>
            <person name="Costa F.F."/>
            <person name="Costa M.C.R."/>
            <person name="Costa-Neto C.M."/>
            <person name="Coutinho L.L."/>
            <person name="Cristofani M."/>
            <person name="Dias-Neto E."/>
            <person name="Docena C."/>
            <person name="El-Dorry H."/>
            <person name="Facincani A.P."/>
            <person name="Ferreira A.J.S."/>
            <person name="Ferreira V.C.A."/>
            <person name="Ferro J.A."/>
            <person name="Fraga J.S."/>
            <person name="Franca S.C."/>
            <person name="Franco M.C."/>
            <person name="Frohme M."/>
            <person name="Furlan L.R."/>
            <person name="Garnier M."/>
            <person name="Goldman G.H."/>
            <person name="Goldman M.H.S."/>
            <person name="Gomes S.L."/>
            <person name="Gruber A."/>
            <person name="Ho P.L."/>
            <person name="Hoheisel J.D."/>
            <person name="Junqueira M.L."/>
            <person name="Kemper E.L."/>
            <person name="Kitajima J.P."/>
            <person name="Krieger J.E."/>
            <person name="Kuramae E.E."/>
            <person name="Laigret F."/>
            <person name="Lambais M.R."/>
            <person name="Leite L.C.C."/>
            <person name="Lemos E.G.M."/>
            <person name="Lemos M.V.F."/>
            <person name="Lopes S.A."/>
            <person name="Lopes C.R."/>
            <person name="Machado J.A."/>
            <person name="Machado M.A."/>
            <person name="Madeira A.M.B.N."/>
            <person name="Madeira H.M.F."/>
            <person name="Marino C.L."/>
            <person name="Marques M.V."/>
            <person name="Martins E.A.L."/>
            <person name="Martins E.M.F."/>
            <person name="Matsukuma A.Y."/>
            <person name="Menck C.F.M."/>
            <person name="Miracca E.C."/>
            <person name="Miyaki C.Y."/>
            <person name="Monteiro-Vitorello C.B."/>
            <person name="Moon D.H."/>
            <person name="Nagai M.A."/>
            <person name="Nascimento A.L.T.O."/>
            <person name="Netto L.E.S."/>
            <person name="Nhani A. Jr."/>
            <person name="Nobrega F.G."/>
            <person name="Nunes L.R."/>
            <person name="Oliveira M.A."/>
            <person name="de Oliveira M.C."/>
            <person name="de Oliveira R.C."/>
            <person name="Palmieri D.A."/>
            <person name="Paris A."/>
            <person name="Peixoto B.R."/>
            <person name="Pereira G.A.G."/>
            <person name="Pereira H.A. Jr."/>
            <person name="Pesquero J.B."/>
            <person name="Quaggio R.B."/>
            <person name="Roberto P.G."/>
            <person name="Rodrigues V."/>
            <person name="de Rosa A.J.M."/>
            <person name="de Rosa V.E. Jr."/>
            <person name="de Sa R.G."/>
            <person name="Santelli R.V."/>
            <person name="Sawasaki H.E."/>
            <person name="da Silva A.C.R."/>
            <person name="da Silva A.M."/>
            <person name="da Silva F.R."/>
            <person name="Silva W.A. Jr."/>
            <person name="da Silveira J.F."/>
            <person name="Silvestri M.L.Z."/>
            <person name="Siqueira W.J."/>
            <person name="de Souza A.A."/>
            <person name="de Souza A.P."/>
            <person name="Terenzi M.F."/>
            <person name="Truffi D."/>
            <person name="Tsai S.M."/>
            <person name="Tsuhako M.H."/>
            <person name="Vallada H."/>
            <person name="Van Sluys M.A."/>
            <person name="Verjovski-Almeida S."/>
            <person name="Vettore A.L."/>
            <person name="Zago M.A."/>
            <person name="Zatz M."/>
            <person name="Meidanis J."/>
            <person name="Setubal J.C."/>
        </authorList>
    </citation>
    <scope>NUCLEOTIDE SEQUENCE [LARGE SCALE GENOMIC DNA]</scope>
    <source>
        <strain>9a5c</strain>
    </source>
</reference>
<gene>
    <name type="primary">argB</name>
    <name type="ordered locus">XF_1001</name>
</gene>
<comment type="catalytic activity">
    <reaction>
        <text>N-acetyl-L-glutamate + ATP = N-acetyl-L-glutamyl 5-phosphate + ADP</text>
        <dbReference type="Rhea" id="RHEA:14629"/>
        <dbReference type="ChEBI" id="CHEBI:30616"/>
        <dbReference type="ChEBI" id="CHEBI:44337"/>
        <dbReference type="ChEBI" id="CHEBI:57936"/>
        <dbReference type="ChEBI" id="CHEBI:456216"/>
        <dbReference type="EC" id="2.7.2.8"/>
    </reaction>
</comment>
<comment type="pathway">
    <text>Amino-acid biosynthesis; L-arginine biosynthesis; N(2)-acetyl-L-ornithine from L-glutamate: step 2/4.</text>
</comment>
<comment type="subcellular location">
    <subcellularLocation>
        <location evidence="1">Cytoplasm</location>
    </subcellularLocation>
</comment>
<comment type="similarity">
    <text evidence="3">In the N-terminal section; belongs to the acetylglutamate kinase family. ArgB subfamily.</text>
</comment>
<comment type="sequence caution" evidence="3">
    <conflict type="erroneous initiation">
        <sequence resource="EMBL-CDS" id="AAF83811"/>
    </conflict>
</comment>